<accession>A4WMD6</accession>
<proteinExistence type="inferred from homology"/>
<protein>
    <recommendedName>
        <fullName evidence="1">Large ribosomal subunit protein uL18</fullName>
    </recommendedName>
    <alternativeName>
        <fullName evidence="2">50S ribosomal protein L18</fullName>
    </alternativeName>
</protein>
<feature type="chain" id="PRO_1000053091" description="Large ribosomal subunit protein uL18">
    <location>
        <begin position="1"/>
        <end position="205"/>
    </location>
</feature>
<organism>
    <name type="scientific">Pyrobaculum arsenaticum (strain DSM 13514 / JCM 11321 / PZ6)</name>
    <dbReference type="NCBI Taxonomy" id="340102"/>
    <lineage>
        <taxon>Archaea</taxon>
        <taxon>Thermoproteota</taxon>
        <taxon>Thermoprotei</taxon>
        <taxon>Thermoproteales</taxon>
        <taxon>Thermoproteaceae</taxon>
        <taxon>Pyrobaculum</taxon>
    </lineage>
</organism>
<gene>
    <name evidence="1" type="primary">rpl18</name>
    <name type="ordered locus">Pars_2006</name>
</gene>
<comment type="function">
    <text evidence="1">This is one of the proteins that bind and probably mediate the attachment of the 5S RNA into the large ribosomal subunit, where it forms part of the central protuberance.</text>
</comment>
<comment type="subunit">
    <text evidence="1">Part of the 50S ribosomal subunit. Contacts the 5S and 23S rRNAs.</text>
</comment>
<comment type="similarity">
    <text evidence="1">Belongs to the universal ribosomal protein uL18 family.</text>
</comment>
<name>RL18_PYRAR</name>
<evidence type="ECO:0000255" key="1">
    <source>
        <dbReference type="HAMAP-Rule" id="MF_01337"/>
    </source>
</evidence>
<evidence type="ECO:0000305" key="2"/>
<keyword id="KW-0687">Ribonucleoprotein</keyword>
<keyword id="KW-0689">Ribosomal protein</keyword>
<keyword id="KW-0694">RNA-binding</keyword>
<keyword id="KW-0699">rRNA-binding</keyword>
<reference key="1">
    <citation type="submission" date="2007-04" db="EMBL/GenBank/DDBJ databases">
        <title>Complete sequence of Pyrobaculum arsenaticum DSM 13514.</title>
        <authorList>
            <consortium name="US DOE Joint Genome Institute"/>
            <person name="Copeland A."/>
            <person name="Lucas S."/>
            <person name="Lapidus A."/>
            <person name="Barry K."/>
            <person name="Glavina del Rio T."/>
            <person name="Dalin E."/>
            <person name="Tice H."/>
            <person name="Pitluck S."/>
            <person name="Chain P."/>
            <person name="Malfatti S."/>
            <person name="Shin M."/>
            <person name="Vergez L."/>
            <person name="Schmutz J."/>
            <person name="Larimer F."/>
            <person name="Land M."/>
            <person name="Hauser L."/>
            <person name="Kyrpides N."/>
            <person name="Mikhailova N."/>
            <person name="Cozen A.E."/>
            <person name="Fitz-Gibbon S.T."/>
            <person name="House C.H."/>
            <person name="Saltikov C."/>
            <person name="Lowe T.M."/>
            <person name="Richardson P."/>
        </authorList>
    </citation>
    <scope>NUCLEOTIDE SEQUENCE [LARGE SCALE GENOMIC DNA]</scope>
    <source>
        <strain>ATCC 700994 / DSM 13514 / JCM 11321 / PZ6</strain>
    </source>
</reference>
<sequence>MARSGRYKVPFRRRREGLTNYRKRRKLVISKKPRLVVRKTNKHIIAQIVVAKPIGDETVAGADTRILTKFGWRGDENNTSAAYLLGLVVGYKARMRGVEEAILDIGLHRPTPGARVFAVLKGALDAGLKIPHGEEVLPSDERIRGEHIAEYAAKLKEENPDAYKARFSRYLQRGLEPERLPDHFEEVRKAIQQHYENKLAKIVAK</sequence>
<dbReference type="EMBL" id="CP000660">
    <property type="protein sequence ID" value="ABP51553.1"/>
    <property type="molecule type" value="Genomic_DNA"/>
</dbReference>
<dbReference type="SMR" id="A4WMD6"/>
<dbReference type="STRING" id="340102.Pars_2006"/>
<dbReference type="KEGG" id="pas:Pars_2006"/>
<dbReference type="HOGENOM" id="CLU_056222_2_0_2"/>
<dbReference type="OrthoDB" id="8644at2157"/>
<dbReference type="PhylomeDB" id="A4WMD6"/>
<dbReference type="Proteomes" id="UP000001567">
    <property type="component" value="Chromosome"/>
</dbReference>
<dbReference type="GO" id="GO:0022625">
    <property type="term" value="C:cytosolic large ribosomal subunit"/>
    <property type="evidence" value="ECO:0007669"/>
    <property type="project" value="TreeGrafter"/>
</dbReference>
<dbReference type="GO" id="GO:0008097">
    <property type="term" value="F:5S rRNA binding"/>
    <property type="evidence" value="ECO:0007669"/>
    <property type="project" value="InterPro"/>
</dbReference>
<dbReference type="GO" id="GO:0003735">
    <property type="term" value="F:structural constituent of ribosome"/>
    <property type="evidence" value="ECO:0007669"/>
    <property type="project" value="InterPro"/>
</dbReference>
<dbReference type="GO" id="GO:0000027">
    <property type="term" value="P:ribosomal large subunit assembly"/>
    <property type="evidence" value="ECO:0007669"/>
    <property type="project" value="TreeGrafter"/>
</dbReference>
<dbReference type="GO" id="GO:0006412">
    <property type="term" value="P:translation"/>
    <property type="evidence" value="ECO:0007669"/>
    <property type="project" value="UniProtKB-UniRule"/>
</dbReference>
<dbReference type="CDD" id="cd00432">
    <property type="entry name" value="Ribosomal_L18_L5e"/>
    <property type="match status" value="1"/>
</dbReference>
<dbReference type="FunFam" id="3.30.420.100:FF:000008">
    <property type="entry name" value="50S ribosomal protein L18"/>
    <property type="match status" value="1"/>
</dbReference>
<dbReference type="Gene3D" id="3.30.420.100">
    <property type="match status" value="1"/>
</dbReference>
<dbReference type="HAMAP" id="MF_01337_A">
    <property type="entry name" value="Ribosomal_uL18_A"/>
    <property type="match status" value="1"/>
</dbReference>
<dbReference type="InterPro" id="IPR005485">
    <property type="entry name" value="Rbsml_uL18_euk"/>
</dbReference>
<dbReference type="NCBIfam" id="NF006342">
    <property type="entry name" value="PRK08569.1"/>
    <property type="match status" value="1"/>
</dbReference>
<dbReference type="PANTHER" id="PTHR23410:SF12">
    <property type="entry name" value="LARGE RIBOSOMAL SUBUNIT PROTEIN UL18"/>
    <property type="match status" value="1"/>
</dbReference>
<dbReference type="PANTHER" id="PTHR23410">
    <property type="entry name" value="RIBOSOMAL PROTEIN L5-RELATED"/>
    <property type="match status" value="1"/>
</dbReference>
<dbReference type="Pfam" id="PF17144">
    <property type="entry name" value="Ribosomal_L5e"/>
    <property type="match status" value="2"/>
</dbReference>
<dbReference type="SUPFAM" id="SSF53137">
    <property type="entry name" value="Translational machinery components"/>
    <property type="match status" value="1"/>
</dbReference>